<protein>
    <recommendedName>
        <fullName evidence="1">4-diphosphocytidyl-2-C-methyl-D-erythritol kinase</fullName>
        <shortName evidence="1">CMK</shortName>
        <ecNumber evidence="1">2.7.1.148</ecNumber>
    </recommendedName>
    <alternativeName>
        <fullName evidence="1">4-(cytidine-5'-diphospho)-2-C-methyl-D-erythritol kinase</fullName>
    </alternativeName>
</protein>
<gene>
    <name evidence="1" type="primary">ispE</name>
    <name type="ordered locus">Veis_0952</name>
</gene>
<reference key="1">
    <citation type="submission" date="2006-12" db="EMBL/GenBank/DDBJ databases">
        <title>Complete sequence of chromosome 1 of Verminephrobacter eiseniae EF01-2.</title>
        <authorList>
            <person name="Copeland A."/>
            <person name="Lucas S."/>
            <person name="Lapidus A."/>
            <person name="Barry K."/>
            <person name="Detter J.C."/>
            <person name="Glavina del Rio T."/>
            <person name="Dalin E."/>
            <person name="Tice H."/>
            <person name="Pitluck S."/>
            <person name="Chertkov O."/>
            <person name="Brettin T."/>
            <person name="Bruce D."/>
            <person name="Han C."/>
            <person name="Tapia R."/>
            <person name="Gilna P."/>
            <person name="Schmutz J."/>
            <person name="Larimer F."/>
            <person name="Land M."/>
            <person name="Hauser L."/>
            <person name="Kyrpides N."/>
            <person name="Kim E."/>
            <person name="Stahl D."/>
            <person name="Richardson P."/>
        </authorList>
    </citation>
    <scope>NUCLEOTIDE SEQUENCE [LARGE SCALE GENOMIC DNA]</scope>
    <source>
        <strain>EF01-2</strain>
    </source>
</reference>
<organism>
    <name type="scientific">Verminephrobacter eiseniae (strain EF01-2)</name>
    <dbReference type="NCBI Taxonomy" id="391735"/>
    <lineage>
        <taxon>Bacteria</taxon>
        <taxon>Pseudomonadati</taxon>
        <taxon>Pseudomonadota</taxon>
        <taxon>Betaproteobacteria</taxon>
        <taxon>Burkholderiales</taxon>
        <taxon>Comamonadaceae</taxon>
        <taxon>Verminephrobacter</taxon>
    </lineage>
</organism>
<name>ISPE_VEREI</name>
<keyword id="KW-0067">ATP-binding</keyword>
<keyword id="KW-0414">Isoprene biosynthesis</keyword>
<keyword id="KW-0418">Kinase</keyword>
<keyword id="KW-0547">Nucleotide-binding</keyword>
<keyword id="KW-1185">Reference proteome</keyword>
<keyword id="KW-0808">Transferase</keyword>
<comment type="function">
    <text evidence="1">Catalyzes the phosphorylation of the position 2 hydroxy group of 4-diphosphocytidyl-2C-methyl-D-erythritol.</text>
</comment>
<comment type="catalytic activity">
    <reaction evidence="1">
        <text>4-CDP-2-C-methyl-D-erythritol + ATP = 4-CDP-2-C-methyl-D-erythritol 2-phosphate + ADP + H(+)</text>
        <dbReference type="Rhea" id="RHEA:18437"/>
        <dbReference type="ChEBI" id="CHEBI:15378"/>
        <dbReference type="ChEBI" id="CHEBI:30616"/>
        <dbReference type="ChEBI" id="CHEBI:57823"/>
        <dbReference type="ChEBI" id="CHEBI:57919"/>
        <dbReference type="ChEBI" id="CHEBI:456216"/>
        <dbReference type="EC" id="2.7.1.148"/>
    </reaction>
</comment>
<comment type="pathway">
    <text evidence="1">Isoprenoid biosynthesis; isopentenyl diphosphate biosynthesis via DXP pathway; isopentenyl diphosphate from 1-deoxy-D-xylulose 5-phosphate: step 3/6.</text>
</comment>
<comment type="similarity">
    <text evidence="1">Belongs to the GHMP kinase family. IspE subfamily.</text>
</comment>
<accession>A1WGH3</accession>
<feature type="chain" id="PRO_0000335769" description="4-diphosphocytidyl-2-C-methyl-D-erythritol kinase">
    <location>
        <begin position="1"/>
        <end position="300"/>
    </location>
</feature>
<feature type="active site" evidence="1">
    <location>
        <position position="12"/>
    </location>
</feature>
<feature type="active site" evidence="1">
    <location>
        <position position="136"/>
    </location>
</feature>
<feature type="binding site" evidence="1">
    <location>
        <begin position="94"/>
        <end position="104"/>
    </location>
    <ligand>
        <name>ATP</name>
        <dbReference type="ChEBI" id="CHEBI:30616"/>
    </ligand>
</feature>
<sequence>MQALYDLPAPAKLNLFLHIIGRRADGYHLIESVFMLIDWCDTLHFECRADGAISRQDLGAPLPAADLSIRAAHALRAATGCRQGAHIGLLKRLPAQAGIGGGSSDAATTLLALNRLWGLGLSLSALEKIGVTLGADVPFFVRGRNARVAGIGEIITPLAHGQLPPACFAVVKPAAGLETKAIFSSPLLKRASGSATISGFAAADFGRDGDCYQDADFCRNDLQPVAQALCPEVTQAIEWLRARGLQGRMTGSGSAVFAQIPQAPDLGHVGDLGAAPEGWQVRVCENLMLHPLAGWAADED</sequence>
<evidence type="ECO:0000255" key="1">
    <source>
        <dbReference type="HAMAP-Rule" id="MF_00061"/>
    </source>
</evidence>
<proteinExistence type="inferred from homology"/>
<dbReference type="EC" id="2.7.1.148" evidence="1"/>
<dbReference type="EMBL" id="CP000542">
    <property type="protein sequence ID" value="ABM56730.1"/>
    <property type="molecule type" value="Genomic_DNA"/>
</dbReference>
<dbReference type="RefSeq" id="WP_011808743.1">
    <property type="nucleotide sequence ID" value="NC_008786.1"/>
</dbReference>
<dbReference type="SMR" id="A1WGH3"/>
<dbReference type="STRING" id="391735.Veis_0952"/>
<dbReference type="GeneID" id="76459633"/>
<dbReference type="KEGG" id="vei:Veis_0952"/>
<dbReference type="eggNOG" id="COG1947">
    <property type="taxonomic scope" value="Bacteria"/>
</dbReference>
<dbReference type="HOGENOM" id="CLU_053057_3_0_4"/>
<dbReference type="OrthoDB" id="9809438at2"/>
<dbReference type="UniPathway" id="UPA00056">
    <property type="reaction ID" value="UER00094"/>
</dbReference>
<dbReference type="Proteomes" id="UP000000374">
    <property type="component" value="Chromosome"/>
</dbReference>
<dbReference type="GO" id="GO:0050515">
    <property type="term" value="F:4-(cytidine 5'-diphospho)-2-C-methyl-D-erythritol kinase activity"/>
    <property type="evidence" value="ECO:0007669"/>
    <property type="project" value="UniProtKB-UniRule"/>
</dbReference>
<dbReference type="GO" id="GO:0005524">
    <property type="term" value="F:ATP binding"/>
    <property type="evidence" value="ECO:0007669"/>
    <property type="project" value="UniProtKB-UniRule"/>
</dbReference>
<dbReference type="GO" id="GO:0019288">
    <property type="term" value="P:isopentenyl diphosphate biosynthetic process, methylerythritol 4-phosphate pathway"/>
    <property type="evidence" value="ECO:0007669"/>
    <property type="project" value="UniProtKB-UniRule"/>
</dbReference>
<dbReference type="GO" id="GO:0016114">
    <property type="term" value="P:terpenoid biosynthetic process"/>
    <property type="evidence" value="ECO:0007669"/>
    <property type="project" value="InterPro"/>
</dbReference>
<dbReference type="Gene3D" id="3.30.230.10">
    <property type="match status" value="1"/>
</dbReference>
<dbReference type="Gene3D" id="3.30.70.890">
    <property type="entry name" value="GHMP kinase, C-terminal domain"/>
    <property type="match status" value="1"/>
</dbReference>
<dbReference type="HAMAP" id="MF_00061">
    <property type="entry name" value="IspE"/>
    <property type="match status" value="1"/>
</dbReference>
<dbReference type="InterPro" id="IPR013750">
    <property type="entry name" value="GHMP_kinase_C_dom"/>
</dbReference>
<dbReference type="InterPro" id="IPR036554">
    <property type="entry name" value="GHMP_kinase_C_sf"/>
</dbReference>
<dbReference type="InterPro" id="IPR006204">
    <property type="entry name" value="GHMP_kinase_N_dom"/>
</dbReference>
<dbReference type="InterPro" id="IPR004424">
    <property type="entry name" value="IspE"/>
</dbReference>
<dbReference type="InterPro" id="IPR020568">
    <property type="entry name" value="Ribosomal_Su5_D2-typ_SF"/>
</dbReference>
<dbReference type="InterPro" id="IPR014721">
    <property type="entry name" value="Ribsml_uS5_D2-typ_fold_subgr"/>
</dbReference>
<dbReference type="NCBIfam" id="TIGR00154">
    <property type="entry name" value="ispE"/>
    <property type="match status" value="1"/>
</dbReference>
<dbReference type="PANTHER" id="PTHR43527">
    <property type="entry name" value="4-DIPHOSPHOCYTIDYL-2-C-METHYL-D-ERYTHRITOL KINASE, CHLOROPLASTIC"/>
    <property type="match status" value="1"/>
</dbReference>
<dbReference type="PANTHER" id="PTHR43527:SF2">
    <property type="entry name" value="4-DIPHOSPHOCYTIDYL-2-C-METHYL-D-ERYTHRITOL KINASE, CHLOROPLASTIC"/>
    <property type="match status" value="1"/>
</dbReference>
<dbReference type="Pfam" id="PF08544">
    <property type="entry name" value="GHMP_kinases_C"/>
    <property type="match status" value="1"/>
</dbReference>
<dbReference type="Pfam" id="PF00288">
    <property type="entry name" value="GHMP_kinases_N"/>
    <property type="match status" value="1"/>
</dbReference>
<dbReference type="PIRSF" id="PIRSF010376">
    <property type="entry name" value="IspE"/>
    <property type="match status" value="1"/>
</dbReference>
<dbReference type="SUPFAM" id="SSF55060">
    <property type="entry name" value="GHMP Kinase, C-terminal domain"/>
    <property type="match status" value="1"/>
</dbReference>
<dbReference type="SUPFAM" id="SSF54211">
    <property type="entry name" value="Ribosomal protein S5 domain 2-like"/>
    <property type="match status" value="1"/>
</dbReference>